<name>NAGB_CLOBM</name>
<sequence length="244" mass="27332">MRIIVVDNYEKMSKKAAAMIASQVILKPDSVLGLATGDTPIGMYKEIIDIYKNEKMDFSKVRTFNLDEYYGLNRENPQSYYYYMMNNLFNHVNIDENNINIPNGMADNIEIECKEYERKIDKAGGIDLQILGIGVNGHIGFNEPNISFESETHLVNLNEKTIESNSRFFSSKEEVPTKAISMGIKSIIHSKKIILLACGSAKSDAVSKAINGKINPNIPASILQLHRDVVVIIDKEAASKLNLK</sequence>
<dbReference type="EC" id="3.5.99.6" evidence="1"/>
<dbReference type="EMBL" id="CP000962">
    <property type="protein sequence ID" value="ACA55763.1"/>
    <property type="molecule type" value="Genomic_DNA"/>
</dbReference>
<dbReference type="RefSeq" id="WP_012343707.1">
    <property type="nucleotide sequence ID" value="NC_010520.1"/>
</dbReference>
<dbReference type="SMR" id="B1KZ07"/>
<dbReference type="KEGG" id="cbl:CLK_2221"/>
<dbReference type="HOGENOM" id="CLU_049611_1_1_9"/>
<dbReference type="UniPathway" id="UPA00629">
    <property type="reaction ID" value="UER00684"/>
</dbReference>
<dbReference type="GO" id="GO:0005737">
    <property type="term" value="C:cytoplasm"/>
    <property type="evidence" value="ECO:0007669"/>
    <property type="project" value="TreeGrafter"/>
</dbReference>
<dbReference type="GO" id="GO:0004342">
    <property type="term" value="F:glucosamine-6-phosphate deaminase activity"/>
    <property type="evidence" value="ECO:0007669"/>
    <property type="project" value="UniProtKB-UniRule"/>
</dbReference>
<dbReference type="GO" id="GO:0042802">
    <property type="term" value="F:identical protein binding"/>
    <property type="evidence" value="ECO:0007669"/>
    <property type="project" value="TreeGrafter"/>
</dbReference>
<dbReference type="GO" id="GO:0005975">
    <property type="term" value="P:carbohydrate metabolic process"/>
    <property type="evidence" value="ECO:0007669"/>
    <property type="project" value="InterPro"/>
</dbReference>
<dbReference type="GO" id="GO:0006043">
    <property type="term" value="P:glucosamine catabolic process"/>
    <property type="evidence" value="ECO:0007669"/>
    <property type="project" value="TreeGrafter"/>
</dbReference>
<dbReference type="GO" id="GO:0006046">
    <property type="term" value="P:N-acetylglucosamine catabolic process"/>
    <property type="evidence" value="ECO:0007669"/>
    <property type="project" value="TreeGrafter"/>
</dbReference>
<dbReference type="GO" id="GO:0019262">
    <property type="term" value="P:N-acetylneuraminate catabolic process"/>
    <property type="evidence" value="ECO:0007669"/>
    <property type="project" value="UniProtKB-UniRule"/>
</dbReference>
<dbReference type="CDD" id="cd01399">
    <property type="entry name" value="GlcN6P_deaminase"/>
    <property type="match status" value="1"/>
</dbReference>
<dbReference type="FunFam" id="3.40.50.1360:FF:000003">
    <property type="entry name" value="Glucosamine-6-phosphate deaminase"/>
    <property type="match status" value="1"/>
</dbReference>
<dbReference type="Gene3D" id="3.40.50.1360">
    <property type="match status" value="1"/>
</dbReference>
<dbReference type="HAMAP" id="MF_01241">
    <property type="entry name" value="GlcN6P_deamin"/>
    <property type="match status" value="1"/>
</dbReference>
<dbReference type="InterPro" id="IPR006148">
    <property type="entry name" value="Glc/Gal-6P_isomerase"/>
</dbReference>
<dbReference type="InterPro" id="IPR004547">
    <property type="entry name" value="Glucosamine6P_isomerase"/>
</dbReference>
<dbReference type="InterPro" id="IPR018321">
    <property type="entry name" value="Glucosamine6P_isomerase_CS"/>
</dbReference>
<dbReference type="InterPro" id="IPR037171">
    <property type="entry name" value="NagB/RpiA_transferase-like"/>
</dbReference>
<dbReference type="NCBIfam" id="TIGR00502">
    <property type="entry name" value="nagB"/>
    <property type="match status" value="1"/>
</dbReference>
<dbReference type="NCBIfam" id="NF001684">
    <property type="entry name" value="PRK00443.1-4"/>
    <property type="match status" value="1"/>
</dbReference>
<dbReference type="PANTHER" id="PTHR11280">
    <property type="entry name" value="GLUCOSAMINE-6-PHOSPHATE ISOMERASE"/>
    <property type="match status" value="1"/>
</dbReference>
<dbReference type="PANTHER" id="PTHR11280:SF5">
    <property type="entry name" value="GLUCOSAMINE-6-PHOSPHATE ISOMERASE"/>
    <property type="match status" value="1"/>
</dbReference>
<dbReference type="Pfam" id="PF01182">
    <property type="entry name" value="Glucosamine_iso"/>
    <property type="match status" value="1"/>
</dbReference>
<dbReference type="SUPFAM" id="SSF100950">
    <property type="entry name" value="NagB/RpiA/CoA transferase-like"/>
    <property type="match status" value="1"/>
</dbReference>
<dbReference type="PROSITE" id="PS01161">
    <property type="entry name" value="GLC_GALNAC_ISOMERASE"/>
    <property type="match status" value="1"/>
</dbReference>
<protein>
    <recommendedName>
        <fullName evidence="1">Glucosamine-6-phosphate deaminase</fullName>
        <ecNumber evidence="1">3.5.99.6</ecNumber>
    </recommendedName>
    <alternativeName>
        <fullName evidence="1">GlcN6P deaminase</fullName>
        <shortName evidence="1">GNPDA</shortName>
    </alternativeName>
    <alternativeName>
        <fullName evidence="1">Glucosamine-6-phosphate isomerase</fullName>
    </alternativeName>
</protein>
<gene>
    <name evidence="1" type="primary">nagB</name>
    <name type="ordered locus">CLK_2221</name>
</gene>
<evidence type="ECO:0000255" key="1">
    <source>
        <dbReference type="HAMAP-Rule" id="MF_01241"/>
    </source>
</evidence>
<keyword id="KW-0119">Carbohydrate metabolism</keyword>
<keyword id="KW-0378">Hydrolase</keyword>
<accession>B1KZ07</accession>
<reference key="1">
    <citation type="journal article" date="2007" name="PLoS ONE">
        <title>Analysis of the neurotoxin complex genes in Clostridium botulinum A1-A4 and B1 strains: BoNT/A3, /Ba4 and /B1 clusters are located within plasmids.</title>
        <authorList>
            <person name="Smith T.J."/>
            <person name="Hill K.K."/>
            <person name="Foley B.T."/>
            <person name="Detter J.C."/>
            <person name="Munk A.C."/>
            <person name="Bruce D.C."/>
            <person name="Doggett N.A."/>
            <person name="Smith L.A."/>
            <person name="Marks J.D."/>
            <person name="Xie G."/>
            <person name="Brettin T.S."/>
        </authorList>
    </citation>
    <scope>NUCLEOTIDE SEQUENCE [LARGE SCALE GENOMIC DNA]</scope>
    <source>
        <strain>Loch Maree / Type A3</strain>
    </source>
</reference>
<proteinExistence type="inferred from homology"/>
<organism>
    <name type="scientific">Clostridium botulinum (strain Loch Maree / Type A3)</name>
    <dbReference type="NCBI Taxonomy" id="498214"/>
    <lineage>
        <taxon>Bacteria</taxon>
        <taxon>Bacillati</taxon>
        <taxon>Bacillota</taxon>
        <taxon>Clostridia</taxon>
        <taxon>Eubacteriales</taxon>
        <taxon>Clostridiaceae</taxon>
        <taxon>Clostridium</taxon>
    </lineage>
</organism>
<comment type="function">
    <text evidence="1">Catalyzes the reversible isomerization-deamination of glucosamine 6-phosphate (GlcN6P) to form fructose 6-phosphate (Fru6P) and ammonium ion.</text>
</comment>
<comment type="catalytic activity">
    <reaction evidence="1">
        <text>alpha-D-glucosamine 6-phosphate + H2O = beta-D-fructose 6-phosphate + NH4(+)</text>
        <dbReference type="Rhea" id="RHEA:12172"/>
        <dbReference type="ChEBI" id="CHEBI:15377"/>
        <dbReference type="ChEBI" id="CHEBI:28938"/>
        <dbReference type="ChEBI" id="CHEBI:57634"/>
        <dbReference type="ChEBI" id="CHEBI:75989"/>
        <dbReference type="EC" id="3.5.99.6"/>
    </reaction>
</comment>
<comment type="pathway">
    <text evidence="1">Amino-sugar metabolism; N-acetylneuraminate degradation; D-fructose 6-phosphate from N-acetylneuraminate: step 5/5.</text>
</comment>
<comment type="similarity">
    <text evidence="1">Belongs to the glucosamine/galactosamine-6-phosphate isomerase family. NagB subfamily.</text>
</comment>
<feature type="chain" id="PRO_1000139766" description="Glucosamine-6-phosphate deaminase">
    <location>
        <begin position="1"/>
        <end position="244"/>
    </location>
</feature>
<feature type="active site" description="Proton acceptor; for enolization step" evidence="1">
    <location>
        <position position="67"/>
    </location>
</feature>
<feature type="active site" description="For ring-opening step" evidence="1">
    <location>
        <position position="136"/>
    </location>
</feature>
<feature type="active site" description="Proton acceptor; for ring-opening step" evidence="1">
    <location>
        <position position="138"/>
    </location>
</feature>
<feature type="active site" description="For ring-opening step" evidence="1">
    <location>
        <position position="143"/>
    </location>
</feature>